<protein>
    <recommendedName>
        <fullName evidence="1">Putative competence-damage inducible protein</fullName>
    </recommendedName>
</protein>
<accession>C1CTH7</accession>
<feature type="chain" id="PRO_1000124995" description="Putative competence-damage inducible protein">
    <location>
        <begin position="1"/>
        <end position="418"/>
    </location>
</feature>
<reference key="1">
    <citation type="journal article" date="2010" name="Genome Biol.">
        <title>Structure and dynamics of the pan-genome of Streptococcus pneumoniae and closely related species.</title>
        <authorList>
            <person name="Donati C."/>
            <person name="Hiller N.L."/>
            <person name="Tettelin H."/>
            <person name="Muzzi A."/>
            <person name="Croucher N.J."/>
            <person name="Angiuoli S.V."/>
            <person name="Oggioni M."/>
            <person name="Dunning Hotopp J.C."/>
            <person name="Hu F.Z."/>
            <person name="Riley D.R."/>
            <person name="Covacci A."/>
            <person name="Mitchell T.J."/>
            <person name="Bentley S.D."/>
            <person name="Kilian M."/>
            <person name="Ehrlich G.D."/>
            <person name="Rappuoli R."/>
            <person name="Moxon E.R."/>
            <person name="Masignani V."/>
        </authorList>
    </citation>
    <scope>NUCLEOTIDE SEQUENCE [LARGE SCALE GENOMIC DNA]</scope>
    <source>
        <strain>Taiwan19F-14</strain>
    </source>
</reference>
<organism>
    <name type="scientific">Streptococcus pneumoniae (strain Taiwan19F-14)</name>
    <dbReference type="NCBI Taxonomy" id="487213"/>
    <lineage>
        <taxon>Bacteria</taxon>
        <taxon>Bacillati</taxon>
        <taxon>Bacillota</taxon>
        <taxon>Bacilli</taxon>
        <taxon>Lactobacillales</taxon>
        <taxon>Streptococcaceae</taxon>
        <taxon>Streptococcus</taxon>
    </lineage>
</organism>
<evidence type="ECO:0000255" key="1">
    <source>
        <dbReference type="HAMAP-Rule" id="MF_00226"/>
    </source>
</evidence>
<sequence length="418" mass="45089">MKAEIIAVGTEILTGQIVNTNAQFLSEKLAEIGVDVYFQTAVGDNEVRLLSLLEIASQRSSLVILTGGLGPTEDDLTKQTLAKFLGKALVFDPQAQEKLDIFFALRPDYARTPNNERQAQIVEGAIPLPNETGLAVGGKLEVDGVTYVVLPGPPSELKPMVLNQLLPKLMTGNKLYSRVLRFFGIGESQLVTILADLIDNQIDPTLAPYAKTGEVTLRLSTKASSQEEANQALDILENQILDCQTFEGISLRDFCYGYGEETSLASIVVEELKRQGKTIAAAESLTAGLFQATVANFSGVSSIFEGGFVTYSLEEKSRMLDIPAKNLEEHGVVSEFTAQKMAEQARSKTQSDFGISLTGVAGPDSLEGHPVGTVFIGLAQDQGTEVIKVNIGGRSRADVRHIAVMHAFNLVRKALLSD</sequence>
<name>CINA_STRZT</name>
<proteinExistence type="inferred from homology"/>
<gene>
    <name evidence="1" type="primary">cinA</name>
    <name type="ordered locus">SPT_1899</name>
</gene>
<comment type="similarity">
    <text evidence="1">Belongs to the CinA family.</text>
</comment>
<dbReference type="EMBL" id="CP000921">
    <property type="protein sequence ID" value="ACO24142.1"/>
    <property type="molecule type" value="Genomic_DNA"/>
</dbReference>
<dbReference type="RefSeq" id="WP_000642704.1">
    <property type="nucleotide sequence ID" value="NC_012469.1"/>
</dbReference>
<dbReference type="SMR" id="C1CTH7"/>
<dbReference type="KEGG" id="snt:SPT_1899"/>
<dbReference type="HOGENOM" id="CLU_030805_9_3_9"/>
<dbReference type="CDD" id="cd00885">
    <property type="entry name" value="cinA"/>
    <property type="match status" value="1"/>
</dbReference>
<dbReference type="Gene3D" id="3.30.70.2860">
    <property type="match status" value="1"/>
</dbReference>
<dbReference type="Gene3D" id="3.90.950.20">
    <property type="entry name" value="CinA-like"/>
    <property type="match status" value="1"/>
</dbReference>
<dbReference type="Gene3D" id="3.40.980.10">
    <property type="entry name" value="MoaB/Mog-like domain"/>
    <property type="match status" value="1"/>
</dbReference>
<dbReference type="HAMAP" id="MF_00226_B">
    <property type="entry name" value="CinA_B"/>
    <property type="match status" value="1"/>
</dbReference>
<dbReference type="InterPro" id="IPR050101">
    <property type="entry name" value="CinA"/>
</dbReference>
<dbReference type="InterPro" id="IPR036653">
    <property type="entry name" value="CinA-like_C"/>
</dbReference>
<dbReference type="InterPro" id="IPR008136">
    <property type="entry name" value="CinA_C"/>
</dbReference>
<dbReference type="InterPro" id="IPR041424">
    <property type="entry name" value="CinA_KH"/>
</dbReference>
<dbReference type="InterPro" id="IPR008135">
    <property type="entry name" value="Competence-induced_CinA"/>
</dbReference>
<dbReference type="InterPro" id="IPR036425">
    <property type="entry name" value="MoaB/Mog-like_dom_sf"/>
</dbReference>
<dbReference type="InterPro" id="IPR001453">
    <property type="entry name" value="MoaB/Mog_dom"/>
</dbReference>
<dbReference type="NCBIfam" id="TIGR00200">
    <property type="entry name" value="cinA_nterm"/>
    <property type="match status" value="1"/>
</dbReference>
<dbReference type="NCBIfam" id="TIGR00199">
    <property type="entry name" value="PncC_domain"/>
    <property type="match status" value="1"/>
</dbReference>
<dbReference type="NCBIfam" id="NF001813">
    <property type="entry name" value="PRK00549.1"/>
    <property type="match status" value="1"/>
</dbReference>
<dbReference type="PANTHER" id="PTHR13939">
    <property type="entry name" value="NICOTINAMIDE-NUCLEOTIDE AMIDOHYDROLASE PNCC"/>
    <property type="match status" value="1"/>
</dbReference>
<dbReference type="PANTHER" id="PTHR13939:SF0">
    <property type="entry name" value="NMN AMIDOHYDROLASE-LIKE PROTEIN YFAY"/>
    <property type="match status" value="1"/>
</dbReference>
<dbReference type="Pfam" id="PF02464">
    <property type="entry name" value="CinA"/>
    <property type="match status" value="1"/>
</dbReference>
<dbReference type="Pfam" id="PF18146">
    <property type="entry name" value="CinA_KH"/>
    <property type="match status" value="1"/>
</dbReference>
<dbReference type="Pfam" id="PF00994">
    <property type="entry name" value="MoCF_biosynth"/>
    <property type="match status" value="1"/>
</dbReference>
<dbReference type="PIRSF" id="PIRSF006728">
    <property type="entry name" value="CinA"/>
    <property type="match status" value="1"/>
</dbReference>
<dbReference type="SMART" id="SM00852">
    <property type="entry name" value="MoCF_biosynth"/>
    <property type="match status" value="1"/>
</dbReference>
<dbReference type="SUPFAM" id="SSF142433">
    <property type="entry name" value="CinA-like"/>
    <property type="match status" value="1"/>
</dbReference>
<dbReference type="SUPFAM" id="SSF53218">
    <property type="entry name" value="Molybdenum cofactor biosynthesis proteins"/>
    <property type="match status" value="1"/>
</dbReference>